<proteinExistence type="inferred from homology"/>
<reference key="1">
    <citation type="journal article" date="2002" name="Proc. Natl. Acad. Sci. U.S.A.">
        <title>Extensive mosaic structure revealed by the complete genome sequence of uropathogenic Escherichia coli.</title>
        <authorList>
            <person name="Welch R.A."/>
            <person name="Burland V."/>
            <person name="Plunkett G. III"/>
            <person name="Redford P."/>
            <person name="Roesch P."/>
            <person name="Rasko D."/>
            <person name="Buckles E.L."/>
            <person name="Liou S.-R."/>
            <person name="Boutin A."/>
            <person name="Hackett J."/>
            <person name="Stroud D."/>
            <person name="Mayhew G.F."/>
            <person name="Rose D.J."/>
            <person name="Zhou S."/>
            <person name="Schwartz D.C."/>
            <person name="Perna N.T."/>
            <person name="Mobley H.L.T."/>
            <person name="Donnenberg M.S."/>
            <person name="Blattner F.R."/>
        </authorList>
    </citation>
    <scope>NUCLEOTIDE SEQUENCE [LARGE SCALE GENOMIC DNA]</scope>
    <source>
        <strain>CFT073 / ATCC 700928 / UPEC</strain>
    </source>
</reference>
<evidence type="ECO:0000255" key="1">
    <source>
        <dbReference type="HAMAP-Rule" id="MF_00306"/>
    </source>
</evidence>
<dbReference type="EC" id="3.6.5.4" evidence="1"/>
<dbReference type="EMBL" id="AE014075">
    <property type="protein sequence ID" value="AAN81581.1"/>
    <property type="molecule type" value="Genomic_DNA"/>
</dbReference>
<dbReference type="RefSeq" id="WP_000460035.1">
    <property type="nucleotide sequence ID" value="NZ_CP051263.1"/>
</dbReference>
<dbReference type="SMR" id="P0AGD8"/>
<dbReference type="STRING" id="199310.c3131"/>
<dbReference type="GeneID" id="93774460"/>
<dbReference type="KEGG" id="ecc:c3131"/>
<dbReference type="eggNOG" id="COG0541">
    <property type="taxonomic scope" value="Bacteria"/>
</dbReference>
<dbReference type="HOGENOM" id="CLU_009301_6_0_6"/>
<dbReference type="BioCyc" id="ECOL199310:C3131-MONOMER"/>
<dbReference type="Proteomes" id="UP000001410">
    <property type="component" value="Chromosome"/>
</dbReference>
<dbReference type="GO" id="GO:0048500">
    <property type="term" value="C:signal recognition particle"/>
    <property type="evidence" value="ECO:0007669"/>
    <property type="project" value="UniProtKB-UniRule"/>
</dbReference>
<dbReference type="GO" id="GO:0008312">
    <property type="term" value="F:7S RNA binding"/>
    <property type="evidence" value="ECO:0007669"/>
    <property type="project" value="InterPro"/>
</dbReference>
<dbReference type="GO" id="GO:0016887">
    <property type="term" value="F:ATP hydrolysis activity"/>
    <property type="evidence" value="ECO:0007669"/>
    <property type="project" value="InterPro"/>
</dbReference>
<dbReference type="GO" id="GO:0005525">
    <property type="term" value="F:GTP binding"/>
    <property type="evidence" value="ECO:0007669"/>
    <property type="project" value="UniProtKB-UniRule"/>
</dbReference>
<dbReference type="GO" id="GO:0003924">
    <property type="term" value="F:GTPase activity"/>
    <property type="evidence" value="ECO:0007669"/>
    <property type="project" value="UniProtKB-UniRule"/>
</dbReference>
<dbReference type="GO" id="GO:0006614">
    <property type="term" value="P:SRP-dependent cotranslational protein targeting to membrane"/>
    <property type="evidence" value="ECO:0007669"/>
    <property type="project" value="InterPro"/>
</dbReference>
<dbReference type="CDD" id="cd18539">
    <property type="entry name" value="SRP_G"/>
    <property type="match status" value="1"/>
</dbReference>
<dbReference type="FunFam" id="3.40.50.300:FF:000022">
    <property type="entry name" value="Signal recognition particle 54 kDa subunit"/>
    <property type="match status" value="1"/>
</dbReference>
<dbReference type="FunFam" id="1.20.120.140:FF:000001">
    <property type="entry name" value="Signal recognition particle GTPase"/>
    <property type="match status" value="1"/>
</dbReference>
<dbReference type="FunFam" id="1.10.260.30:FF:000001">
    <property type="entry name" value="Signal recognition particle protein"/>
    <property type="match status" value="1"/>
</dbReference>
<dbReference type="Gene3D" id="3.40.50.300">
    <property type="entry name" value="P-loop containing nucleotide triphosphate hydrolases"/>
    <property type="match status" value="1"/>
</dbReference>
<dbReference type="Gene3D" id="1.20.120.140">
    <property type="entry name" value="Signal recognition particle SRP54, nucleotide-binding domain"/>
    <property type="match status" value="1"/>
</dbReference>
<dbReference type="Gene3D" id="1.10.260.30">
    <property type="entry name" value="Signal recognition particle, SRP54 subunit, M-domain"/>
    <property type="match status" value="1"/>
</dbReference>
<dbReference type="HAMAP" id="MF_00306">
    <property type="entry name" value="SRP54"/>
    <property type="match status" value="1"/>
</dbReference>
<dbReference type="InterPro" id="IPR003593">
    <property type="entry name" value="AAA+_ATPase"/>
</dbReference>
<dbReference type="InterPro" id="IPR027417">
    <property type="entry name" value="P-loop_NTPase"/>
</dbReference>
<dbReference type="InterPro" id="IPR036891">
    <property type="entry name" value="Signal_recog_part_SRP54_M_sf"/>
</dbReference>
<dbReference type="InterPro" id="IPR013822">
    <property type="entry name" value="Signal_recog_particl_SRP54_hlx"/>
</dbReference>
<dbReference type="InterPro" id="IPR004125">
    <property type="entry name" value="Signal_recog_particle_SRP54_M"/>
</dbReference>
<dbReference type="InterPro" id="IPR004780">
    <property type="entry name" value="SRP"/>
</dbReference>
<dbReference type="InterPro" id="IPR022941">
    <property type="entry name" value="SRP54"/>
</dbReference>
<dbReference type="InterPro" id="IPR000897">
    <property type="entry name" value="SRP54_GTPase_dom"/>
</dbReference>
<dbReference type="InterPro" id="IPR042101">
    <property type="entry name" value="SRP54_N_sf"/>
</dbReference>
<dbReference type="NCBIfam" id="TIGR00959">
    <property type="entry name" value="ffh"/>
    <property type="match status" value="1"/>
</dbReference>
<dbReference type="PANTHER" id="PTHR11564">
    <property type="entry name" value="SIGNAL RECOGNITION PARTICLE 54K PROTEIN SRP54"/>
    <property type="match status" value="1"/>
</dbReference>
<dbReference type="PANTHER" id="PTHR11564:SF5">
    <property type="entry name" value="SIGNAL RECOGNITION PARTICLE SUBUNIT SRP54"/>
    <property type="match status" value="1"/>
</dbReference>
<dbReference type="Pfam" id="PF00448">
    <property type="entry name" value="SRP54"/>
    <property type="match status" value="1"/>
</dbReference>
<dbReference type="Pfam" id="PF02881">
    <property type="entry name" value="SRP54_N"/>
    <property type="match status" value="1"/>
</dbReference>
<dbReference type="Pfam" id="PF02978">
    <property type="entry name" value="SRP_SPB"/>
    <property type="match status" value="1"/>
</dbReference>
<dbReference type="SMART" id="SM00382">
    <property type="entry name" value="AAA"/>
    <property type="match status" value="1"/>
</dbReference>
<dbReference type="SMART" id="SM00962">
    <property type="entry name" value="SRP54"/>
    <property type="match status" value="1"/>
</dbReference>
<dbReference type="SMART" id="SM00963">
    <property type="entry name" value="SRP54_N"/>
    <property type="match status" value="1"/>
</dbReference>
<dbReference type="SUPFAM" id="SSF52540">
    <property type="entry name" value="P-loop containing nucleoside triphosphate hydrolases"/>
    <property type="match status" value="1"/>
</dbReference>
<dbReference type="SUPFAM" id="SSF47446">
    <property type="entry name" value="Signal peptide-binding domain"/>
    <property type="match status" value="1"/>
</dbReference>
<dbReference type="PROSITE" id="PS00300">
    <property type="entry name" value="SRP54"/>
    <property type="match status" value="1"/>
</dbReference>
<sequence>MFDNLTDRLSRTLRNISGRGRLTEDNVKDTLREVRMALLEADVALPVVREFINRVKEKAVGHEVNKSLTPGQEFVKIVRNELVAAMGEENQTLNLAAQPPAVVLMAGLQGAGKTTSVGKLGKFLREKHKKKVLVVSADVYRPAAIKQLETLAEQVGVDFFPSDVGQKPVDIVNAALKEAKLKFYDVLLVDTAGRLHVDEAMMDEIKQVHASINPVETLFVVDAMTGQDAANTAKAFNEALPLTGVVLTKVDGDARGGAALSIRHITGKPIKFLGVGEKTEALEPFHPDRIASRILGMGDVLSLIEDIESKVDRAQAEKLASKLKKGDGFDLNDFLEQLRQMKNMGGMASLMGKLPGMGQIPDNVKSQMDDKVLVRMEAIINSMTMKERAKPEIIKGSRKRRIAAGCGMQVQDVNRLLKQFDDMQRMMKKMKKGGMAKMMRSMKGMMPPGFPGR</sequence>
<feature type="chain" id="PRO_0000101155" description="Signal recognition particle protein">
    <location>
        <begin position="1"/>
        <end position="453"/>
    </location>
</feature>
<feature type="binding site" evidence="1">
    <location>
        <begin position="107"/>
        <end position="114"/>
    </location>
    <ligand>
        <name>GTP</name>
        <dbReference type="ChEBI" id="CHEBI:37565"/>
    </ligand>
</feature>
<feature type="binding site" evidence="1">
    <location>
        <begin position="190"/>
        <end position="194"/>
    </location>
    <ligand>
        <name>GTP</name>
        <dbReference type="ChEBI" id="CHEBI:37565"/>
    </ligand>
</feature>
<feature type="binding site" evidence="1">
    <location>
        <begin position="248"/>
        <end position="251"/>
    </location>
    <ligand>
        <name>GTP</name>
        <dbReference type="ChEBI" id="CHEBI:37565"/>
    </ligand>
</feature>
<protein>
    <recommendedName>
        <fullName evidence="1">Signal recognition particle protein</fullName>
        <ecNumber evidence="1">3.6.5.4</ecNumber>
    </recommendedName>
    <alternativeName>
        <fullName evidence="1">Fifty-four homolog</fullName>
    </alternativeName>
</protein>
<gene>
    <name evidence="1" type="primary">ffh</name>
    <name type="ordered locus">c3131</name>
</gene>
<name>SRP54_ECOL6</name>
<keyword id="KW-0963">Cytoplasm</keyword>
<keyword id="KW-0342">GTP-binding</keyword>
<keyword id="KW-0378">Hydrolase</keyword>
<keyword id="KW-0547">Nucleotide-binding</keyword>
<keyword id="KW-1185">Reference proteome</keyword>
<keyword id="KW-0687">Ribonucleoprotein</keyword>
<keyword id="KW-0694">RNA-binding</keyword>
<keyword id="KW-0733">Signal recognition particle</keyword>
<comment type="function">
    <text evidence="1">Involved in targeting and insertion of nascent membrane proteins into the cytoplasmic membrane. Binds to the hydrophobic signal sequence of the ribosome-nascent chain (RNC) as it emerges from the ribosomes. The SRP-RNC complex is then targeted to the cytoplasmic membrane where it interacts with the SRP receptor FtsY. Interaction with FtsY leads to the transfer of the RNC complex to the Sec translocase for insertion into the membrane, the hydrolysis of GTP by both Ffh and FtsY, and the dissociation of the SRP-FtsY complex into the individual components.</text>
</comment>
<comment type="catalytic activity">
    <reaction evidence="1">
        <text>GTP + H2O = GDP + phosphate + H(+)</text>
        <dbReference type="Rhea" id="RHEA:19669"/>
        <dbReference type="ChEBI" id="CHEBI:15377"/>
        <dbReference type="ChEBI" id="CHEBI:15378"/>
        <dbReference type="ChEBI" id="CHEBI:37565"/>
        <dbReference type="ChEBI" id="CHEBI:43474"/>
        <dbReference type="ChEBI" id="CHEBI:58189"/>
        <dbReference type="EC" id="3.6.5.4"/>
    </reaction>
</comment>
<comment type="subunit">
    <text evidence="1">Part of the signal recognition particle protein translocation system, which is composed of SRP and FtsY. SRP is a ribonucleoprotein composed of Ffh and a 4.5S RNA molecule.</text>
</comment>
<comment type="subcellular location">
    <subcellularLocation>
        <location evidence="1">Cytoplasm</location>
    </subcellularLocation>
    <text evidence="1">The SRP-RNC complex is targeted to the cytoplasmic membrane.</text>
</comment>
<comment type="domain">
    <text evidence="1">Composed of three domains: the N-terminal N domain, which is responsible for interactions with the ribosome, the central G domain, which binds GTP, and the C-terminal M domain, which binds the RNA and the signal sequence of the RNC.</text>
</comment>
<comment type="similarity">
    <text evidence="1">Belongs to the GTP-binding SRP family. SRP54 subfamily.</text>
</comment>
<organism>
    <name type="scientific">Escherichia coli O6:H1 (strain CFT073 / ATCC 700928 / UPEC)</name>
    <dbReference type="NCBI Taxonomy" id="199310"/>
    <lineage>
        <taxon>Bacteria</taxon>
        <taxon>Pseudomonadati</taxon>
        <taxon>Pseudomonadota</taxon>
        <taxon>Gammaproteobacteria</taxon>
        <taxon>Enterobacterales</taxon>
        <taxon>Enterobacteriaceae</taxon>
        <taxon>Escherichia</taxon>
    </lineage>
</organism>
<accession>P0AGD8</accession>
<accession>P07019</accession>
<accession>P77007</accession>
<accession>P77008</accession>